<dbReference type="EC" id="2.7.7.87" evidence="1"/>
<dbReference type="EMBL" id="CP000304">
    <property type="protein sequence ID" value="ABP77732.1"/>
    <property type="molecule type" value="Genomic_DNA"/>
</dbReference>
<dbReference type="RefSeq" id="WP_011911275.1">
    <property type="nucleotide sequence ID" value="NC_009434.1"/>
</dbReference>
<dbReference type="SMR" id="A4VFI1"/>
<dbReference type="KEGG" id="psa:PST_0024"/>
<dbReference type="eggNOG" id="COG0009">
    <property type="taxonomic scope" value="Bacteria"/>
</dbReference>
<dbReference type="HOGENOM" id="CLU_031397_6_0_6"/>
<dbReference type="Proteomes" id="UP000000233">
    <property type="component" value="Chromosome"/>
</dbReference>
<dbReference type="GO" id="GO:0005737">
    <property type="term" value="C:cytoplasm"/>
    <property type="evidence" value="ECO:0007669"/>
    <property type="project" value="UniProtKB-SubCell"/>
</dbReference>
<dbReference type="GO" id="GO:0005524">
    <property type="term" value="F:ATP binding"/>
    <property type="evidence" value="ECO:0007669"/>
    <property type="project" value="UniProtKB-UniRule"/>
</dbReference>
<dbReference type="GO" id="GO:0003725">
    <property type="term" value="F:double-stranded RNA binding"/>
    <property type="evidence" value="ECO:0007669"/>
    <property type="project" value="InterPro"/>
</dbReference>
<dbReference type="GO" id="GO:0061710">
    <property type="term" value="F:L-threonylcarbamoyladenylate synthase"/>
    <property type="evidence" value="ECO:0007669"/>
    <property type="project" value="UniProtKB-EC"/>
</dbReference>
<dbReference type="GO" id="GO:0000049">
    <property type="term" value="F:tRNA binding"/>
    <property type="evidence" value="ECO:0007669"/>
    <property type="project" value="TreeGrafter"/>
</dbReference>
<dbReference type="GO" id="GO:0006450">
    <property type="term" value="P:regulation of translational fidelity"/>
    <property type="evidence" value="ECO:0007669"/>
    <property type="project" value="TreeGrafter"/>
</dbReference>
<dbReference type="GO" id="GO:0002949">
    <property type="term" value="P:tRNA threonylcarbamoyladenosine modification"/>
    <property type="evidence" value="ECO:0007669"/>
    <property type="project" value="UniProtKB-UniRule"/>
</dbReference>
<dbReference type="FunFam" id="3.90.870.10:FF:000004">
    <property type="entry name" value="Threonylcarbamoyl-AMP synthase"/>
    <property type="match status" value="1"/>
</dbReference>
<dbReference type="Gene3D" id="3.90.870.10">
    <property type="entry name" value="DHBP synthase"/>
    <property type="match status" value="1"/>
</dbReference>
<dbReference type="HAMAP" id="MF_01852">
    <property type="entry name" value="TsaC"/>
    <property type="match status" value="1"/>
</dbReference>
<dbReference type="InterPro" id="IPR017945">
    <property type="entry name" value="DHBP_synth_RibB-like_a/b_dom"/>
</dbReference>
<dbReference type="InterPro" id="IPR006070">
    <property type="entry name" value="Sua5-like_dom"/>
</dbReference>
<dbReference type="InterPro" id="IPR023535">
    <property type="entry name" value="TC-AMP_synthase"/>
</dbReference>
<dbReference type="InterPro" id="IPR050156">
    <property type="entry name" value="TC-AMP_synthase_SUA5"/>
</dbReference>
<dbReference type="PANTHER" id="PTHR17490">
    <property type="entry name" value="SUA5"/>
    <property type="match status" value="1"/>
</dbReference>
<dbReference type="PANTHER" id="PTHR17490:SF18">
    <property type="entry name" value="THREONYLCARBAMOYL-AMP SYNTHASE"/>
    <property type="match status" value="1"/>
</dbReference>
<dbReference type="Pfam" id="PF01300">
    <property type="entry name" value="Sua5_yciO_yrdC"/>
    <property type="match status" value="1"/>
</dbReference>
<dbReference type="SUPFAM" id="SSF55821">
    <property type="entry name" value="YrdC/RibB"/>
    <property type="match status" value="1"/>
</dbReference>
<dbReference type="PROSITE" id="PS51163">
    <property type="entry name" value="YRDC"/>
    <property type="match status" value="1"/>
</dbReference>
<gene>
    <name evidence="1" type="primary">tsaC</name>
    <name type="synonym">rimN</name>
    <name type="ordered locus">PST_0024</name>
</gene>
<evidence type="ECO:0000255" key="1">
    <source>
        <dbReference type="HAMAP-Rule" id="MF_01852"/>
    </source>
</evidence>
<organism>
    <name type="scientific">Stutzerimonas stutzeri (strain A1501)</name>
    <name type="common">Pseudomonas stutzeri</name>
    <dbReference type="NCBI Taxonomy" id="379731"/>
    <lineage>
        <taxon>Bacteria</taxon>
        <taxon>Pseudomonadati</taxon>
        <taxon>Pseudomonadota</taxon>
        <taxon>Gammaproteobacteria</taxon>
        <taxon>Pseudomonadales</taxon>
        <taxon>Pseudomonadaceae</taxon>
        <taxon>Stutzerimonas</taxon>
    </lineage>
</organism>
<keyword id="KW-0067">ATP-binding</keyword>
<keyword id="KW-0963">Cytoplasm</keyword>
<keyword id="KW-0547">Nucleotide-binding</keyword>
<keyword id="KW-0548">Nucleotidyltransferase</keyword>
<keyword id="KW-1185">Reference proteome</keyword>
<keyword id="KW-0808">Transferase</keyword>
<keyword id="KW-0819">tRNA processing</keyword>
<accession>A4VFI1</accession>
<protein>
    <recommendedName>
        <fullName evidence="1">Threonylcarbamoyl-AMP synthase</fullName>
        <shortName evidence="1">TC-AMP synthase</shortName>
        <ecNumber evidence="1">2.7.7.87</ecNumber>
    </recommendedName>
    <alternativeName>
        <fullName evidence="1">L-threonylcarbamoyladenylate synthase</fullName>
    </alternativeName>
    <alternativeName>
        <fullName evidence="1">t(6)A37 threonylcarbamoyladenosine biosynthesis protein TsaC</fullName>
    </alternativeName>
    <alternativeName>
        <fullName evidence="1">tRNA threonylcarbamoyladenosine biosynthesis protein TsaC</fullName>
    </alternativeName>
</protein>
<reference key="1">
    <citation type="journal article" date="2008" name="Proc. Natl. Acad. Sci. U.S.A.">
        <title>Nitrogen fixation island and rhizosphere competence traits in the genome of root-associated Pseudomonas stutzeri A1501.</title>
        <authorList>
            <person name="Yan Y."/>
            <person name="Yang J."/>
            <person name="Dou Y."/>
            <person name="Chen M."/>
            <person name="Ping S."/>
            <person name="Peng J."/>
            <person name="Lu W."/>
            <person name="Zhang W."/>
            <person name="Yao Z."/>
            <person name="Li H."/>
            <person name="Liu W."/>
            <person name="He S."/>
            <person name="Geng L."/>
            <person name="Zhang X."/>
            <person name="Yang F."/>
            <person name="Yu H."/>
            <person name="Zhan Y."/>
            <person name="Li D."/>
            <person name="Lin Z."/>
            <person name="Wang Y."/>
            <person name="Elmerich C."/>
            <person name="Lin M."/>
            <person name="Jin Q."/>
        </authorList>
    </citation>
    <scope>NUCLEOTIDE SEQUENCE [LARGE SCALE GENOMIC DNA]</scope>
    <source>
        <strain>A1501</strain>
    </source>
</reference>
<sequence length="185" mass="20624">MIGDWRVQQVARVVRAGGVIAYPTEAVWGVGCDPWDEDAVLRLLALKERPVEKGLILIADTVEQFDFLLDDLPERWLDRLSGTWPGPNTWLVPHRGRLPEWITGRHDSVALRVTDHPLVKRLCALTGPLVSTSANPAGRPAARSRLRVEQYFPQQLDAVFNGALGGRRNPSVIRDLRSGEVIRPA</sequence>
<proteinExistence type="inferred from homology"/>
<comment type="function">
    <text evidence="1">Required for the formation of a threonylcarbamoyl group on adenosine at position 37 (t(6)A37) in tRNAs that read codons beginning with adenine. Catalyzes the conversion of L-threonine, HCO(3)(-)/CO(2) and ATP to give threonylcarbamoyl-AMP (TC-AMP) as the acyladenylate intermediate, with the release of diphosphate.</text>
</comment>
<comment type="catalytic activity">
    <reaction evidence="1">
        <text>L-threonine + hydrogencarbonate + ATP = L-threonylcarbamoyladenylate + diphosphate + H2O</text>
        <dbReference type="Rhea" id="RHEA:36407"/>
        <dbReference type="ChEBI" id="CHEBI:15377"/>
        <dbReference type="ChEBI" id="CHEBI:17544"/>
        <dbReference type="ChEBI" id="CHEBI:30616"/>
        <dbReference type="ChEBI" id="CHEBI:33019"/>
        <dbReference type="ChEBI" id="CHEBI:57926"/>
        <dbReference type="ChEBI" id="CHEBI:73682"/>
        <dbReference type="EC" id="2.7.7.87"/>
    </reaction>
</comment>
<comment type="subcellular location">
    <subcellularLocation>
        <location evidence="1">Cytoplasm</location>
    </subcellularLocation>
</comment>
<comment type="similarity">
    <text evidence="1">Belongs to the SUA5 family. TsaC subfamily.</text>
</comment>
<feature type="chain" id="PRO_0000352959" description="Threonylcarbamoyl-AMP synthase">
    <location>
        <begin position="1"/>
        <end position="185"/>
    </location>
</feature>
<feature type="domain" description="YrdC-like" evidence="1">
    <location>
        <begin position="4"/>
        <end position="185"/>
    </location>
</feature>
<name>TSAC_STUS1</name>